<dbReference type="EC" id="6.3.4.2" evidence="1"/>
<dbReference type="EMBL" id="AE000783">
    <property type="protein sequence ID" value="AAC66946.1"/>
    <property type="molecule type" value="Genomic_DNA"/>
</dbReference>
<dbReference type="PIR" id="F70171">
    <property type="entry name" value="F70171"/>
</dbReference>
<dbReference type="RefSeq" id="NP_212709.1">
    <property type="nucleotide sequence ID" value="NC_001318.1"/>
</dbReference>
<dbReference type="RefSeq" id="WP_002657046.1">
    <property type="nucleotide sequence ID" value="NC_001318.1"/>
</dbReference>
<dbReference type="SMR" id="O51522"/>
<dbReference type="STRING" id="224326.BB_0575"/>
<dbReference type="PaxDb" id="224326-BB_0575"/>
<dbReference type="EnsemblBacteria" id="AAC66946">
    <property type="protein sequence ID" value="AAC66946"/>
    <property type="gene ID" value="BB_0575"/>
</dbReference>
<dbReference type="GeneID" id="56568008"/>
<dbReference type="KEGG" id="bbu:BB_0575"/>
<dbReference type="PATRIC" id="fig|224326.49.peg.966"/>
<dbReference type="HOGENOM" id="CLU_011675_5_0_12"/>
<dbReference type="OrthoDB" id="9801107at2"/>
<dbReference type="UniPathway" id="UPA00159">
    <property type="reaction ID" value="UER00277"/>
</dbReference>
<dbReference type="Proteomes" id="UP000001807">
    <property type="component" value="Chromosome"/>
</dbReference>
<dbReference type="GO" id="GO:0005829">
    <property type="term" value="C:cytosol"/>
    <property type="evidence" value="ECO:0000314"/>
    <property type="project" value="CAFA"/>
</dbReference>
<dbReference type="GO" id="GO:0005524">
    <property type="term" value="F:ATP binding"/>
    <property type="evidence" value="ECO:0007669"/>
    <property type="project" value="UniProtKB-KW"/>
</dbReference>
<dbReference type="GO" id="GO:0003883">
    <property type="term" value="F:CTP synthase activity"/>
    <property type="evidence" value="ECO:0007669"/>
    <property type="project" value="UniProtKB-UniRule"/>
</dbReference>
<dbReference type="GO" id="GO:0004359">
    <property type="term" value="F:glutaminase activity"/>
    <property type="evidence" value="ECO:0007669"/>
    <property type="project" value="RHEA"/>
</dbReference>
<dbReference type="GO" id="GO:0042802">
    <property type="term" value="F:identical protein binding"/>
    <property type="evidence" value="ECO:0007669"/>
    <property type="project" value="TreeGrafter"/>
</dbReference>
<dbReference type="GO" id="GO:0046872">
    <property type="term" value="F:metal ion binding"/>
    <property type="evidence" value="ECO:0007669"/>
    <property type="project" value="UniProtKB-KW"/>
</dbReference>
<dbReference type="GO" id="GO:0044210">
    <property type="term" value="P:'de novo' CTP biosynthetic process"/>
    <property type="evidence" value="ECO:0007669"/>
    <property type="project" value="UniProtKB-UniRule"/>
</dbReference>
<dbReference type="GO" id="GO:0019856">
    <property type="term" value="P:pyrimidine nucleobase biosynthetic process"/>
    <property type="evidence" value="ECO:0007669"/>
    <property type="project" value="TreeGrafter"/>
</dbReference>
<dbReference type="CDD" id="cd03113">
    <property type="entry name" value="CTPS_N"/>
    <property type="match status" value="1"/>
</dbReference>
<dbReference type="CDD" id="cd01746">
    <property type="entry name" value="GATase1_CTP_Synthase"/>
    <property type="match status" value="1"/>
</dbReference>
<dbReference type="FunFam" id="3.40.50.300:FF:000009">
    <property type="entry name" value="CTP synthase"/>
    <property type="match status" value="1"/>
</dbReference>
<dbReference type="FunFam" id="3.40.50.880:FF:000124">
    <property type="entry name" value="CTP synthase"/>
    <property type="match status" value="1"/>
</dbReference>
<dbReference type="Gene3D" id="3.40.50.880">
    <property type="match status" value="1"/>
</dbReference>
<dbReference type="Gene3D" id="3.40.50.300">
    <property type="entry name" value="P-loop containing nucleotide triphosphate hydrolases"/>
    <property type="match status" value="1"/>
</dbReference>
<dbReference type="HAMAP" id="MF_01227">
    <property type="entry name" value="PyrG"/>
    <property type="match status" value="1"/>
</dbReference>
<dbReference type="InterPro" id="IPR029062">
    <property type="entry name" value="Class_I_gatase-like"/>
</dbReference>
<dbReference type="InterPro" id="IPR004468">
    <property type="entry name" value="CTP_synthase"/>
</dbReference>
<dbReference type="InterPro" id="IPR017456">
    <property type="entry name" value="CTP_synthase_N"/>
</dbReference>
<dbReference type="InterPro" id="IPR017926">
    <property type="entry name" value="GATASE"/>
</dbReference>
<dbReference type="InterPro" id="IPR033828">
    <property type="entry name" value="GATase1_CTP_Synthase"/>
</dbReference>
<dbReference type="InterPro" id="IPR027417">
    <property type="entry name" value="P-loop_NTPase"/>
</dbReference>
<dbReference type="NCBIfam" id="NF003792">
    <property type="entry name" value="PRK05380.1"/>
    <property type="match status" value="1"/>
</dbReference>
<dbReference type="NCBIfam" id="TIGR00337">
    <property type="entry name" value="PyrG"/>
    <property type="match status" value="1"/>
</dbReference>
<dbReference type="PANTHER" id="PTHR11550">
    <property type="entry name" value="CTP SYNTHASE"/>
    <property type="match status" value="1"/>
</dbReference>
<dbReference type="PANTHER" id="PTHR11550:SF0">
    <property type="entry name" value="CTP SYNTHASE-RELATED"/>
    <property type="match status" value="1"/>
</dbReference>
<dbReference type="Pfam" id="PF06418">
    <property type="entry name" value="CTP_synth_N"/>
    <property type="match status" value="1"/>
</dbReference>
<dbReference type="Pfam" id="PF00117">
    <property type="entry name" value="GATase"/>
    <property type="match status" value="1"/>
</dbReference>
<dbReference type="SUPFAM" id="SSF52317">
    <property type="entry name" value="Class I glutamine amidotransferase-like"/>
    <property type="match status" value="1"/>
</dbReference>
<dbReference type="SUPFAM" id="SSF52540">
    <property type="entry name" value="P-loop containing nucleoside triphosphate hydrolases"/>
    <property type="match status" value="1"/>
</dbReference>
<dbReference type="PROSITE" id="PS51273">
    <property type="entry name" value="GATASE_TYPE_1"/>
    <property type="match status" value="1"/>
</dbReference>
<proteinExistence type="evidence at protein level"/>
<gene>
    <name evidence="1" type="primary">pyrG</name>
    <name type="ordered locus">BB_0575</name>
</gene>
<keyword id="KW-0067">ATP-binding</keyword>
<keyword id="KW-0315">Glutamine amidotransferase</keyword>
<keyword id="KW-0436">Ligase</keyword>
<keyword id="KW-0460">Magnesium</keyword>
<keyword id="KW-0479">Metal-binding</keyword>
<keyword id="KW-0547">Nucleotide-binding</keyword>
<keyword id="KW-0665">Pyrimidine biosynthesis</keyword>
<keyword id="KW-1185">Reference proteome</keyword>
<name>PYRG_BORBU</name>
<protein>
    <recommendedName>
        <fullName evidence="1">CTP synthase</fullName>
        <ecNumber evidence="1">6.3.4.2</ecNumber>
    </recommendedName>
    <alternativeName>
        <fullName evidence="1">Cytidine 5'-triphosphate synthase</fullName>
    </alternativeName>
    <alternativeName>
        <fullName evidence="1">Cytidine triphosphate synthetase</fullName>
        <shortName evidence="1">CTP synthetase</shortName>
        <shortName evidence="1">CTPS</shortName>
    </alternativeName>
    <alternativeName>
        <fullName evidence="1">UTP--ammonia ligase</fullName>
    </alternativeName>
</protein>
<organism>
    <name type="scientific">Borreliella burgdorferi (strain ATCC 35210 / DSM 4680 / CIP 102532 / B31)</name>
    <name type="common">Borrelia burgdorferi</name>
    <dbReference type="NCBI Taxonomy" id="224326"/>
    <lineage>
        <taxon>Bacteria</taxon>
        <taxon>Pseudomonadati</taxon>
        <taxon>Spirochaetota</taxon>
        <taxon>Spirochaetia</taxon>
        <taxon>Spirochaetales</taxon>
        <taxon>Borreliaceae</taxon>
        <taxon>Borreliella</taxon>
    </lineage>
</organism>
<feature type="chain" id="PRO_0000138166" description="CTP synthase">
    <location>
        <begin position="1"/>
        <end position="533"/>
    </location>
</feature>
<feature type="domain" description="Glutamine amidotransferase type-1" evidence="1">
    <location>
        <begin position="304"/>
        <end position="533"/>
    </location>
</feature>
<feature type="region of interest" description="Amidoligase domain" evidence="1">
    <location>
        <begin position="1"/>
        <end position="269"/>
    </location>
</feature>
<feature type="active site" description="Nucleophile; for glutamine hydrolysis" evidence="1">
    <location>
        <position position="382"/>
    </location>
</feature>
<feature type="active site" evidence="1">
    <location>
        <position position="511"/>
    </location>
</feature>
<feature type="active site" evidence="1">
    <location>
        <position position="513"/>
    </location>
</feature>
<feature type="binding site" evidence="1">
    <location>
        <position position="16"/>
    </location>
    <ligand>
        <name>CTP</name>
        <dbReference type="ChEBI" id="CHEBI:37563"/>
        <note>allosteric inhibitor</note>
    </ligand>
</feature>
<feature type="binding site" evidence="1">
    <location>
        <position position="16"/>
    </location>
    <ligand>
        <name>UTP</name>
        <dbReference type="ChEBI" id="CHEBI:46398"/>
    </ligand>
</feature>
<feature type="binding site" evidence="1">
    <location>
        <begin position="17"/>
        <end position="22"/>
    </location>
    <ligand>
        <name>ATP</name>
        <dbReference type="ChEBI" id="CHEBI:30616"/>
    </ligand>
</feature>
<feature type="binding site" evidence="1">
    <location>
        <position position="73"/>
    </location>
    <ligand>
        <name>ATP</name>
        <dbReference type="ChEBI" id="CHEBI:30616"/>
    </ligand>
</feature>
<feature type="binding site" evidence="1">
    <location>
        <position position="73"/>
    </location>
    <ligand>
        <name>Mg(2+)</name>
        <dbReference type="ChEBI" id="CHEBI:18420"/>
    </ligand>
</feature>
<feature type="binding site" evidence="1">
    <location>
        <position position="143"/>
    </location>
    <ligand>
        <name>Mg(2+)</name>
        <dbReference type="ChEBI" id="CHEBI:18420"/>
    </ligand>
</feature>
<feature type="binding site" evidence="1">
    <location>
        <begin position="150"/>
        <end position="152"/>
    </location>
    <ligand>
        <name>CTP</name>
        <dbReference type="ChEBI" id="CHEBI:37563"/>
        <note>allosteric inhibitor</note>
    </ligand>
</feature>
<feature type="binding site" evidence="1">
    <location>
        <begin position="190"/>
        <end position="195"/>
    </location>
    <ligand>
        <name>CTP</name>
        <dbReference type="ChEBI" id="CHEBI:37563"/>
        <note>allosteric inhibitor</note>
    </ligand>
</feature>
<feature type="binding site" evidence="1">
    <location>
        <begin position="190"/>
        <end position="195"/>
    </location>
    <ligand>
        <name>UTP</name>
        <dbReference type="ChEBI" id="CHEBI:46398"/>
    </ligand>
</feature>
<feature type="binding site" evidence="1">
    <location>
        <position position="226"/>
    </location>
    <ligand>
        <name>CTP</name>
        <dbReference type="ChEBI" id="CHEBI:37563"/>
        <note>allosteric inhibitor</note>
    </ligand>
</feature>
<feature type="binding site" evidence="1">
    <location>
        <position position="226"/>
    </location>
    <ligand>
        <name>UTP</name>
        <dbReference type="ChEBI" id="CHEBI:46398"/>
    </ligand>
</feature>
<feature type="binding site" evidence="1">
    <location>
        <position position="355"/>
    </location>
    <ligand>
        <name>L-glutamine</name>
        <dbReference type="ChEBI" id="CHEBI:58359"/>
    </ligand>
</feature>
<feature type="binding site" evidence="1">
    <location>
        <begin position="383"/>
        <end position="386"/>
    </location>
    <ligand>
        <name>L-glutamine</name>
        <dbReference type="ChEBI" id="CHEBI:58359"/>
    </ligand>
</feature>
<feature type="binding site" evidence="1">
    <location>
        <position position="406"/>
    </location>
    <ligand>
        <name>L-glutamine</name>
        <dbReference type="ChEBI" id="CHEBI:58359"/>
    </ligand>
</feature>
<feature type="binding site" evidence="1">
    <location>
        <position position="466"/>
    </location>
    <ligand>
        <name>L-glutamine</name>
        <dbReference type="ChEBI" id="CHEBI:58359"/>
    </ligand>
</feature>
<sequence>MKKNLKILVITGGVISGIGKGVTSASIARLFRYDFRVTPIKCDGYLNTDPGTINPVEHGEVFVLDDGGEVDMDFGHYERFLNLNAKSSWNITMGKIYKKILENERKGKYLGRTVQLIPHVTDEIKSTIFQIASSENSDMLIIEIGGTVGDMENILFIETVRQIRQEIGSGNISFIHLTYVPSPAGINEQKSKPTQQSVKTLNKAGIFPDLIIARSSQVLTDQIRKKVAMFCNVESTSIIDNVDVSTIYEIPISFYKQGVHEILSSKLNIKVDPKIEELSKLVGVIKSNFFVPKKIINIAICGKYAELDDSYASIRESLVHVAAHLDLLIKSTLIDSNDLNESCLKEFDGIIVPGGFGGKGYEGKIMAIKYARENNIPFLGICLGLQLAVIEFARNVCGILDADTEENLARDKPLKSPVIHLLPEQKGIKDKGATMRLGGYPVILKKNTIAFKLYGQDRIIERFRHRYEVNNDYIDLFAKNGLIVSGFSSDFKMAKLIEIPENKFFVACQFHPELITRIENPAKLFLGLIKACI</sequence>
<reference key="1">
    <citation type="journal article" date="1997" name="Nature">
        <title>Genomic sequence of a Lyme disease spirochaete, Borrelia burgdorferi.</title>
        <authorList>
            <person name="Fraser C.M."/>
            <person name="Casjens S."/>
            <person name="Huang W.M."/>
            <person name="Sutton G.G."/>
            <person name="Clayton R.A."/>
            <person name="Lathigra R."/>
            <person name="White O."/>
            <person name="Ketchum K.A."/>
            <person name="Dodson R.J."/>
            <person name="Hickey E.K."/>
            <person name="Gwinn M.L."/>
            <person name="Dougherty B.A."/>
            <person name="Tomb J.-F."/>
            <person name="Fleischmann R.D."/>
            <person name="Richardson D.L."/>
            <person name="Peterson J.D."/>
            <person name="Kerlavage A.R."/>
            <person name="Quackenbush J."/>
            <person name="Salzberg S.L."/>
            <person name="Hanson M."/>
            <person name="van Vugt R."/>
            <person name="Palmer N."/>
            <person name="Adams M.D."/>
            <person name="Gocayne J.D."/>
            <person name="Weidman J.F."/>
            <person name="Utterback T.R."/>
            <person name="Watthey L."/>
            <person name="McDonald L.A."/>
            <person name="Artiach P."/>
            <person name="Bowman C."/>
            <person name="Garland S.A."/>
            <person name="Fujii C."/>
            <person name="Cotton M.D."/>
            <person name="Horst K."/>
            <person name="Roberts K.M."/>
            <person name="Hatch B."/>
            <person name="Smith H.O."/>
            <person name="Venter J.C."/>
        </authorList>
    </citation>
    <scope>NUCLEOTIDE SEQUENCE [LARGE SCALE GENOMIC DNA]</scope>
    <source>
        <strain>ATCC 35210 / DSM 4680 / CIP 102532 / B31</strain>
    </source>
</reference>
<reference key="2">
    <citation type="journal article" date="2008" name="Proc. Natl. Acad. Sci. U.S.A.">
        <title>MLST of housekeeping genes captures geographic population structure and suggests a European origin of Borrelia burgdorferi.</title>
        <authorList>
            <person name="Margos G."/>
            <person name="Gatewood A.G."/>
            <person name="Aanensen D.M."/>
            <person name="Hanincova K."/>
            <person name="Terekhova D."/>
            <person name="Vollmer S.A."/>
            <person name="Cornet M."/>
            <person name="Piesman J."/>
            <person name="Donaghy M."/>
            <person name="Bormane A."/>
            <person name="Hurn M.A."/>
            <person name="Feil E.J."/>
            <person name="Fish D."/>
            <person name="Casjens S."/>
            <person name="Wormser G.P."/>
            <person name="Schwartz I."/>
            <person name="Kurtenbach K."/>
        </authorList>
    </citation>
    <scope>BIOTECHNOLOGY</scope>
    <source>
        <strain>ATCC 35210 / DSM 4680 / CIP 102532 / B31</strain>
    </source>
</reference>
<comment type="function">
    <text evidence="1">Catalyzes the ATP-dependent amination of UTP to CTP with either L-glutamine or ammonia as the source of nitrogen. Regulates intracellular CTP levels through interactions with the four ribonucleotide triphosphates.</text>
</comment>
<comment type="catalytic activity">
    <reaction evidence="1">
        <text>UTP + L-glutamine + ATP + H2O = CTP + L-glutamate + ADP + phosphate + 2 H(+)</text>
        <dbReference type="Rhea" id="RHEA:26426"/>
        <dbReference type="ChEBI" id="CHEBI:15377"/>
        <dbReference type="ChEBI" id="CHEBI:15378"/>
        <dbReference type="ChEBI" id="CHEBI:29985"/>
        <dbReference type="ChEBI" id="CHEBI:30616"/>
        <dbReference type="ChEBI" id="CHEBI:37563"/>
        <dbReference type="ChEBI" id="CHEBI:43474"/>
        <dbReference type="ChEBI" id="CHEBI:46398"/>
        <dbReference type="ChEBI" id="CHEBI:58359"/>
        <dbReference type="ChEBI" id="CHEBI:456216"/>
        <dbReference type="EC" id="6.3.4.2"/>
    </reaction>
</comment>
<comment type="catalytic activity">
    <reaction evidence="1">
        <text>L-glutamine + H2O = L-glutamate + NH4(+)</text>
        <dbReference type="Rhea" id="RHEA:15889"/>
        <dbReference type="ChEBI" id="CHEBI:15377"/>
        <dbReference type="ChEBI" id="CHEBI:28938"/>
        <dbReference type="ChEBI" id="CHEBI:29985"/>
        <dbReference type="ChEBI" id="CHEBI:58359"/>
    </reaction>
</comment>
<comment type="catalytic activity">
    <reaction evidence="1">
        <text>UTP + NH4(+) + ATP = CTP + ADP + phosphate + 2 H(+)</text>
        <dbReference type="Rhea" id="RHEA:16597"/>
        <dbReference type="ChEBI" id="CHEBI:15378"/>
        <dbReference type="ChEBI" id="CHEBI:28938"/>
        <dbReference type="ChEBI" id="CHEBI:30616"/>
        <dbReference type="ChEBI" id="CHEBI:37563"/>
        <dbReference type="ChEBI" id="CHEBI:43474"/>
        <dbReference type="ChEBI" id="CHEBI:46398"/>
        <dbReference type="ChEBI" id="CHEBI:456216"/>
    </reaction>
</comment>
<comment type="activity regulation">
    <text evidence="1">Allosterically activated by GTP, when glutamine is the substrate; GTP has no effect on the reaction when ammonia is the substrate. The allosteric effector GTP functions by stabilizing the protein conformation that binds the tetrahedral intermediate(s) formed during glutamine hydrolysis. Inhibited by the product CTP, via allosteric rather than competitive inhibition.</text>
</comment>
<comment type="pathway">
    <text evidence="1">Pyrimidine metabolism; CTP biosynthesis via de novo pathway; CTP from UDP: step 2/2.</text>
</comment>
<comment type="subunit">
    <text evidence="1">Homotetramer.</text>
</comment>
<comment type="biotechnology">
    <text evidence="2">One of 8 loci used for multilocus sequence typing (MLST) in Borrelia burgdorferi (PubMed:18574151).</text>
</comment>
<comment type="miscellaneous">
    <text evidence="1">CTPSs have evolved a hybrid strategy for distinguishing between UTP and CTP. The overlapping regions of the product feedback inhibitory and substrate sites recognize a common feature in both compounds, the triphosphate moiety. To differentiate isosteric substrate and product pyrimidine rings, an additional pocket far from the expected kinase/ligase catalytic site, specifically recognizes the cytosine and ribose portions of the product inhibitor.</text>
</comment>
<comment type="similarity">
    <text evidence="1">Belongs to the CTP synthase family.</text>
</comment>
<accession>O51522</accession>
<evidence type="ECO:0000255" key="1">
    <source>
        <dbReference type="HAMAP-Rule" id="MF_01227"/>
    </source>
</evidence>
<evidence type="ECO:0000269" key="2">
    <source>
    </source>
</evidence>